<feature type="chain" id="PRO_0000322249" description="Prefoldin subunit alpha">
    <location>
        <begin position="1"/>
        <end position="154"/>
    </location>
</feature>
<comment type="function">
    <text evidence="1">Molecular chaperone capable of stabilizing a range of proteins. Seems to fulfill an ATP-independent, HSP70-like function in archaeal de novo protein folding.</text>
</comment>
<comment type="subunit">
    <text evidence="1">Heterohexamer of two alpha and four beta subunits.</text>
</comment>
<comment type="subcellular location">
    <subcellularLocation>
        <location evidence="1">Cytoplasm</location>
    </subcellularLocation>
</comment>
<comment type="similarity">
    <text evidence="1">Belongs to the prefoldin alpha subunit family.</text>
</comment>
<sequence>MSQAGQSSRTITLEEALEQLSLLESQLNQLQATIREIEVRIAQLTAVEDALASLAEGAEDALIPLDGRGTVLVPASIKKLERILVHAGLNVFVEVDREKALEYLRDEKAALSKLLDAYSREYARLAQYYSALRSAIESALQAAPPQAKSQQSQQ</sequence>
<protein>
    <recommendedName>
        <fullName evidence="1">Prefoldin subunit alpha</fullName>
    </recommendedName>
    <alternativeName>
        <fullName evidence="1">GimC subunit alpha</fullName>
    </alternativeName>
</protein>
<organism>
    <name type="scientific">Hyperthermus butylicus (strain DSM 5456 / JCM 9403 / PLM1-5)</name>
    <dbReference type="NCBI Taxonomy" id="415426"/>
    <lineage>
        <taxon>Archaea</taxon>
        <taxon>Thermoproteota</taxon>
        <taxon>Thermoprotei</taxon>
        <taxon>Desulfurococcales</taxon>
        <taxon>Pyrodictiaceae</taxon>
        <taxon>Hyperthermus</taxon>
    </lineage>
</organism>
<reference key="1">
    <citation type="journal article" date="2007" name="Archaea">
        <title>The genome of Hyperthermus butylicus: a sulfur-reducing, peptide fermenting, neutrophilic Crenarchaeote growing up to 108 degrees C.</title>
        <authorList>
            <person name="Bruegger K."/>
            <person name="Chen L."/>
            <person name="Stark M."/>
            <person name="Zibat A."/>
            <person name="Redder P."/>
            <person name="Ruepp A."/>
            <person name="Awayez M."/>
            <person name="She Q."/>
            <person name="Garrett R.A."/>
            <person name="Klenk H.-P."/>
        </authorList>
    </citation>
    <scope>NUCLEOTIDE SEQUENCE [LARGE SCALE GENOMIC DNA]</scope>
    <source>
        <strain>DSM 5456 / JCM 9403 / PLM1-5</strain>
    </source>
</reference>
<accession>A2BN59</accession>
<evidence type="ECO:0000255" key="1">
    <source>
        <dbReference type="HAMAP-Rule" id="MF_00308"/>
    </source>
</evidence>
<keyword id="KW-0143">Chaperone</keyword>
<keyword id="KW-0963">Cytoplasm</keyword>
<keyword id="KW-1185">Reference proteome</keyword>
<proteinExistence type="inferred from homology"/>
<gene>
    <name evidence="1" type="primary">pfdA</name>
    <name type="ordered locus">Hbut_1601</name>
</gene>
<dbReference type="EMBL" id="CP000493">
    <property type="protein sequence ID" value="ABM81420.1"/>
    <property type="molecule type" value="Genomic_DNA"/>
</dbReference>
<dbReference type="RefSeq" id="WP_011822738.1">
    <property type="nucleotide sequence ID" value="NC_008818.1"/>
</dbReference>
<dbReference type="SMR" id="A2BN59"/>
<dbReference type="STRING" id="415426.Hbut_1601"/>
<dbReference type="EnsemblBacteria" id="ABM81420">
    <property type="protein sequence ID" value="ABM81420"/>
    <property type="gene ID" value="Hbut_1601"/>
</dbReference>
<dbReference type="GeneID" id="4782502"/>
<dbReference type="KEGG" id="hbu:Hbut_1601"/>
<dbReference type="eggNOG" id="arCOG01341">
    <property type="taxonomic scope" value="Archaea"/>
</dbReference>
<dbReference type="HOGENOM" id="CLU_1782556_0_0_2"/>
<dbReference type="OrthoDB" id="15164at2157"/>
<dbReference type="Proteomes" id="UP000002593">
    <property type="component" value="Chromosome"/>
</dbReference>
<dbReference type="GO" id="GO:0005737">
    <property type="term" value="C:cytoplasm"/>
    <property type="evidence" value="ECO:0007669"/>
    <property type="project" value="UniProtKB-SubCell"/>
</dbReference>
<dbReference type="GO" id="GO:0016272">
    <property type="term" value="C:prefoldin complex"/>
    <property type="evidence" value="ECO:0007669"/>
    <property type="project" value="UniProtKB-UniRule"/>
</dbReference>
<dbReference type="GO" id="GO:0051082">
    <property type="term" value="F:unfolded protein binding"/>
    <property type="evidence" value="ECO:0007669"/>
    <property type="project" value="UniProtKB-UniRule"/>
</dbReference>
<dbReference type="GO" id="GO:0006457">
    <property type="term" value="P:protein folding"/>
    <property type="evidence" value="ECO:0007669"/>
    <property type="project" value="UniProtKB-UniRule"/>
</dbReference>
<dbReference type="CDD" id="cd00584">
    <property type="entry name" value="Prefoldin_alpha"/>
    <property type="match status" value="1"/>
</dbReference>
<dbReference type="Gene3D" id="1.10.287.370">
    <property type="match status" value="1"/>
</dbReference>
<dbReference type="HAMAP" id="MF_00308">
    <property type="entry name" value="PfdA"/>
    <property type="match status" value="1"/>
</dbReference>
<dbReference type="InterPro" id="IPR011599">
    <property type="entry name" value="PFD_alpha_archaea"/>
</dbReference>
<dbReference type="InterPro" id="IPR009053">
    <property type="entry name" value="Prefoldin"/>
</dbReference>
<dbReference type="InterPro" id="IPR004127">
    <property type="entry name" value="Prefoldin_subunit_alpha"/>
</dbReference>
<dbReference type="NCBIfam" id="TIGR00293">
    <property type="entry name" value="prefoldin subunit alpha"/>
    <property type="match status" value="1"/>
</dbReference>
<dbReference type="Pfam" id="PF02996">
    <property type="entry name" value="Prefoldin"/>
    <property type="match status" value="1"/>
</dbReference>
<dbReference type="SUPFAM" id="SSF46579">
    <property type="entry name" value="Prefoldin"/>
    <property type="match status" value="1"/>
</dbReference>
<name>PFDA_HYPBU</name>